<protein>
    <recommendedName>
        <fullName evidence="1">Threonylcarbamoyl-AMP synthase</fullName>
        <shortName evidence="1">TC-AMP synthase</shortName>
        <ecNumber evidence="1">2.7.7.87</ecNumber>
    </recommendedName>
    <alternativeName>
        <fullName evidence="1">L-threonylcarbamoyladenylate synthase</fullName>
    </alternativeName>
    <alternativeName>
        <fullName evidence="1">t(6)A37 threonylcarbamoyladenosine biosynthesis protein TsaC</fullName>
    </alternativeName>
    <alternativeName>
        <fullName evidence="1">tRNA threonylcarbamoyladenosine biosynthesis protein TsaC</fullName>
    </alternativeName>
</protein>
<organism>
    <name type="scientific">Klebsiella pneumoniae subsp. pneumoniae (strain ATCC 700721 / MGH 78578)</name>
    <dbReference type="NCBI Taxonomy" id="272620"/>
    <lineage>
        <taxon>Bacteria</taxon>
        <taxon>Pseudomonadati</taxon>
        <taxon>Pseudomonadota</taxon>
        <taxon>Gammaproteobacteria</taxon>
        <taxon>Enterobacterales</taxon>
        <taxon>Enterobacteriaceae</taxon>
        <taxon>Klebsiella/Raoultella group</taxon>
        <taxon>Klebsiella</taxon>
        <taxon>Klebsiella pneumoniae complex</taxon>
    </lineage>
</organism>
<name>TSAC_KLEP7</name>
<reference key="1">
    <citation type="submission" date="2006-09" db="EMBL/GenBank/DDBJ databases">
        <authorList>
            <consortium name="The Klebsiella pneumonia Genome Sequencing Project"/>
            <person name="McClelland M."/>
            <person name="Sanderson E.K."/>
            <person name="Spieth J."/>
            <person name="Clifton W.S."/>
            <person name="Latreille P."/>
            <person name="Sabo A."/>
            <person name="Pepin K."/>
            <person name="Bhonagiri V."/>
            <person name="Porwollik S."/>
            <person name="Ali J."/>
            <person name="Wilson R.K."/>
        </authorList>
    </citation>
    <scope>NUCLEOTIDE SEQUENCE [LARGE SCALE GENOMIC DNA]</scope>
    <source>
        <strain>ATCC 700721 / MGH 78578</strain>
    </source>
</reference>
<keyword id="KW-0067">ATP-binding</keyword>
<keyword id="KW-0963">Cytoplasm</keyword>
<keyword id="KW-0547">Nucleotide-binding</keyword>
<keyword id="KW-0548">Nucleotidyltransferase</keyword>
<keyword id="KW-0808">Transferase</keyword>
<keyword id="KW-0819">tRNA processing</keyword>
<comment type="function">
    <text evidence="1">Required for the formation of a threonylcarbamoyl group on adenosine at position 37 (t(6)A37) in tRNAs that read codons beginning with adenine. Catalyzes the conversion of L-threonine, HCO(3)(-)/CO(2) and ATP to give threonylcarbamoyl-AMP (TC-AMP) as the acyladenylate intermediate, with the release of diphosphate.</text>
</comment>
<comment type="catalytic activity">
    <reaction evidence="1">
        <text>L-threonine + hydrogencarbonate + ATP = L-threonylcarbamoyladenylate + diphosphate + H2O</text>
        <dbReference type="Rhea" id="RHEA:36407"/>
        <dbReference type="ChEBI" id="CHEBI:15377"/>
        <dbReference type="ChEBI" id="CHEBI:17544"/>
        <dbReference type="ChEBI" id="CHEBI:30616"/>
        <dbReference type="ChEBI" id="CHEBI:33019"/>
        <dbReference type="ChEBI" id="CHEBI:57926"/>
        <dbReference type="ChEBI" id="CHEBI:73682"/>
        <dbReference type="EC" id="2.7.7.87"/>
    </reaction>
</comment>
<comment type="subcellular location">
    <subcellularLocation>
        <location evidence="1">Cytoplasm</location>
    </subcellularLocation>
</comment>
<comment type="similarity">
    <text evidence="1">Belongs to the SUA5 family. TsaC subfamily.</text>
</comment>
<proteinExistence type="inferred from homology"/>
<gene>
    <name evidence="1" type="primary">tsaC</name>
    <name type="synonym">rimN</name>
    <name type="ordered locus">KPN78578_36460</name>
    <name type="ORF">KPN_03683</name>
</gene>
<sequence length="190" mass="20716">MNNNLPSEAVAHAVAVLKNEHVIAYPTEAVFGVGCDPDSETAVMRLLELKQRPVEKGLILIAASFEQLKPYIDDSRLSDSQREAIFSCWPGPVTFVFPARPETPRWLTGRFDSLAVRVTNHPLVIELCEAYGKPLVSTSANLTGQPPCRTTAEVHAQFGDSFPVVDGATGGRQNPSEIRDALTGELFRQG</sequence>
<dbReference type="EC" id="2.7.7.87" evidence="1"/>
<dbReference type="EMBL" id="CP000647">
    <property type="protein sequence ID" value="ABR79070.1"/>
    <property type="molecule type" value="Genomic_DNA"/>
</dbReference>
<dbReference type="RefSeq" id="WP_002919132.1">
    <property type="nucleotide sequence ID" value="NC_009648.1"/>
</dbReference>
<dbReference type="SMR" id="A6TET6"/>
<dbReference type="STRING" id="272620.KPN_03683"/>
<dbReference type="PaxDb" id="272620-KPN_03683"/>
<dbReference type="EnsemblBacteria" id="ABR79070">
    <property type="protein sequence ID" value="ABR79070"/>
    <property type="gene ID" value="KPN_03683"/>
</dbReference>
<dbReference type="KEGG" id="kpn:KPN_03683"/>
<dbReference type="HOGENOM" id="CLU_031397_6_0_6"/>
<dbReference type="Proteomes" id="UP000000265">
    <property type="component" value="Chromosome"/>
</dbReference>
<dbReference type="GO" id="GO:0005737">
    <property type="term" value="C:cytoplasm"/>
    <property type="evidence" value="ECO:0007669"/>
    <property type="project" value="UniProtKB-SubCell"/>
</dbReference>
<dbReference type="GO" id="GO:0005524">
    <property type="term" value="F:ATP binding"/>
    <property type="evidence" value="ECO:0007669"/>
    <property type="project" value="UniProtKB-UniRule"/>
</dbReference>
<dbReference type="GO" id="GO:0003725">
    <property type="term" value="F:double-stranded RNA binding"/>
    <property type="evidence" value="ECO:0007669"/>
    <property type="project" value="InterPro"/>
</dbReference>
<dbReference type="GO" id="GO:0061710">
    <property type="term" value="F:L-threonylcarbamoyladenylate synthase"/>
    <property type="evidence" value="ECO:0007669"/>
    <property type="project" value="UniProtKB-EC"/>
</dbReference>
<dbReference type="GO" id="GO:0000049">
    <property type="term" value="F:tRNA binding"/>
    <property type="evidence" value="ECO:0007669"/>
    <property type="project" value="TreeGrafter"/>
</dbReference>
<dbReference type="GO" id="GO:0006450">
    <property type="term" value="P:regulation of translational fidelity"/>
    <property type="evidence" value="ECO:0007669"/>
    <property type="project" value="TreeGrafter"/>
</dbReference>
<dbReference type="GO" id="GO:0002949">
    <property type="term" value="P:tRNA threonylcarbamoyladenosine modification"/>
    <property type="evidence" value="ECO:0007669"/>
    <property type="project" value="UniProtKB-UniRule"/>
</dbReference>
<dbReference type="FunFam" id="3.90.870.10:FF:000004">
    <property type="entry name" value="Threonylcarbamoyl-AMP synthase"/>
    <property type="match status" value="1"/>
</dbReference>
<dbReference type="Gene3D" id="3.90.870.10">
    <property type="entry name" value="DHBP synthase"/>
    <property type="match status" value="1"/>
</dbReference>
<dbReference type="HAMAP" id="MF_01852">
    <property type="entry name" value="TsaC"/>
    <property type="match status" value="1"/>
</dbReference>
<dbReference type="InterPro" id="IPR017945">
    <property type="entry name" value="DHBP_synth_RibB-like_a/b_dom"/>
</dbReference>
<dbReference type="InterPro" id="IPR006070">
    <property type="entry name" value="Sua5-like_dom"/>
</dbReference>
<dbReference type="InterPro" id="IPR023535">
    <property type="entry name" value="TC-AMP_synthase"/>
</dbReference>
<dbReference type="InterPro" id="IPR050156">
    <property type="entry name" value="TC-AMP_synthase_SUA5"/>
</dbReference>
<dbReference type="NCBIfam" id="NF007919">
    <property type="entry name" value="PRK10634.1"/>
    <property type="match status" value="1"/>
</dbReference>
<dbReference type="PANTHER" id="PTHR17490">
    <property type="entry name" value="SUA5"/>
    <property type="match status" value="1"/>
</dbReference>
<dbReference type="PANTHER" id="PTHR17490:SF18">
    <property type="entry name" value="THREONYLCARBAMOYL-AMP SYNTHASE"/>
    <property type="match status" value="1"/>
</dbReference>
<dbReference type="Pfam" id="PF01300">
    <property type="entry name" value="Sua5_yciO_yrdC"/>
    <property type="match status" value="1"/>
</dbReference>
<dbReference type="SUPFAM" id="SSF55821">
    <property type="entry name" value="YrdC/RibB"/>
    <property type="match status" value="1"/>
</dbReference>
<dbReference type="PROSITE" id="PS51163">
    <property type="entry name" value="YRDC"/>
    <property type="match status" value="1"/>
</dbReference>
<accession>A6TET6</accession>
<evidence type="ECO:0000255" key="1">
    <source>
        <dbReference type="HAMAP-Rule" id="MF_01852"/>
    </source>
</evidence>
<feature type="chain" id="PRO_0000352931" description="Threonylcarbamoyl-AMP synthase">
    <location>
        <begin position="1"/>
        <end position="190"/>
    </location>
</feature>
<feature type="domain" description="YrdC-like" evidence="1">
    <location>
        <begin position="7"/>
        <end position="190"/>
    </location>
</feature>